<dbReference type="EMBL" id="CP000518">
    <property type="protein sequence ID" value="ABL92506.1"/>
    <property type="molecule type" value="Genomic_DNA"/>
</dbReference>
<dbReference type="SMR" id="A1UI48"/>
<dbReference type="STRING" id="189918.Mkms_3312"/>
<dbReference type="KEGG" id="mkm:Mkms_3312"/>
<dbReference type="HOGENOM" id="CLU_078499_0_0_11"/>
<dbReference type="OrthoDB" id="3731101at2"/>
<dbReference type="GO" id="GO:0005737">
    <property type="term" value="C:cytoplasm"/>
    <property type="evidence" value="ECO:0007669"/>
    <property type="project" value="UniProtKB-SubCell"/>
</dbReference>
<dbReference type="GO" id="GO:0000917">
    <property type="term" value="P:division septum assembly"/>
    <property type="evidence" value="ECO:0007669"/>
    <property type="project" value="UniProtKB-KW"/>
</dbReference>
<dbReference type="GO" id="GO:0043093">
    <property type="term" value="P:FtsZ-dependent cytokinesis"/>
    <property type="evidence" value="ECO:0007669"/>
    <property type="project" value="UniProtKB-UniRule"/>
</dbReference>
<dbReference type="FunFam" id="3.30.110.150:FF:000001">
    <property type="entry name" value="Cell division protein SepF"/>
    <property type="match status" value="1"/>
</dbReference>
<dbReference type="Gene3D" id="3.30.110.150">
    <property type="entry name" value="SepF-like protein"/>
    <property type="match status" value="1"/>
</dbReference>
<dbReference type="HAMAP" id="MF_01197">
    <property type="entry name" value="SepF"/>
    <property type="match status" value="1"/>
</dbReference>
<dbReference type="InterPro" id="IPR023052">
    <property type="entry name" value="Cell_div_SepF"/>
</dbReference>
<dbReference type="InterPro" id="IPR007561">
    <property type="entry name" value="Cell_div_SepF/SepF-rel"/>
</dbReference>
<dbReference type="InterPro" id="IPR038594">
    <property type="entry name" value="SepF-like_sf"/>
</dbReference>
<dbReference type="PANTHER" id="PTHR35798">
    <property type="entry name" value="CELL DIVISION PROTEIN SEPF"/>
    <property type="match status" value="1"/>
</dbReference>
<dbReference type="PANTHER" id="PTHR35798:SF1">
    <property type="entry name" value="CELL DIVISION PROTEIN SEPF"/>
    <property type="match status" value="1"/>
</dbReference>
<dbReference type="Pfam" id="PF04472">
    <property type="entry name" value="SepF"/>
    <property type="match status" value="1"/>
</dbReference>
<evidence type="ECO:0000255" key="1">
    <source>
        <dbReference type="HAMAP-Rule" id="MF_01197"/>
    </source>
</evidence>
<evidence type="ECO:0000256" key="2">
    <source>
        <dbReference type="SAM" id="MobiDB-lite"/>
    </source>
</evidence>
<gene>
    <name evidence="1" type="primary">sepF</name>
    <name type="ordered locus">Mkms_3312</name>
</gene>
<accession>A1UI48</accession>
<name>SEPF_MYCSK</name>
<reference key="1">
    <citation type="submission" date="2006-12" db="EMBL/GenBank/DDBJ databases">
        <title>Complete sequence of chromosome of Mycobacterium sp. KMS.</title>
        <authorList>
            <consortium name="US DOE Joint Genome Institute"/>
            <person name="Copeland A."/>
            <person name="Lucas S."/>
            <person name="Lapidus A."/>
            <person name="Barry K."/>
            <person name="Detter J.C."/>
            <person name="Glavina del Rio T."/>
            <person name="Hammon N."/>
            <person name="Israni S."/>
            <person name="Dalin E."/>
            <person name="Tice H."/>
            <person name="Pitluck S."/>
            <person name="Kiss H."/>
            <person name="Brettin T."/>
            <person name="Bruce D."/>
            <person name="Han C."/>
            <person name="Tapia R."/>
            <person name="Gilna P."/>
            <person name="Schmutz J."/>
            <person name="Larimer F."/>
            <person name="Land M."/>
            <person name="Hauser L."/>
            <person name="Kyrpides N."/>
            <person name="Mikhailova N."/>
            <person name="Miller C.D."/>
            <person name="Richardson P."/>
        </authorList>
    </citation>
    <scope>NUCLEOTIDE SEQUENCE [LARGE SCALE GENOMIC DNA]</scope>
    <source>
        <strain>KMS</strain>
    </source>
</reference>
<organism>
    <name type="scientific">Mycobacterium sp. (strain KMS)</name>
    <dbReference type="NCBI Taxonomy" id="189918"/>
    <lineage>
        <taxon>Bacteria</taxon>
        <taxon>Bacillati</taxon>
        <taxon>Actinomycetota</taxon>
        <taxon>Actinomycetes</taxon>
        <taxon>Mycobacteriales</taxon>
        <taxon>Mycobacteriaceae</taxon>
        <taxon>Mycobacterium</taxon>
    </lineage>
</organism>
<comment type="function">
    <text evidence="1">Cell division protein that is part of the divisome complex and is recruited early to the Z-ring. Probably stimulates Z-ring formation, perhaps through the cross-linking of FtsZ protofilaments. Its function overlaps with FtsA.</text>
</comment>
<comment type="subunit">
    <text evidence="1">Homodimer. Interacts with FtsZ.</text>
</comment>
<comment type="subcellular location">
    <subcellularLocation>
        <location evidence="1">Cytoplasm</location>
    </subcellularLocation>
    <text evidence="1">Localizes to the division site, in a FtsZ-dependent manner.</text>
</comment>
<comment type="similarity">
    <text evidence="1">Belongs to the SepF family.</text>
</comment>
<keyword id="KW-0131">Cell cycle</keyword>
<keyword id="KW-0132">Cell division</keyword>
<keyword id="KW-0963">Cytoplasm</keyword>
<keyword id="KW-0717">Septation</keyword>
<sequence length="220" mass="25146">MSTLHKVKAYFGMAPMDDYDDEYYEDDDRAERGAARGYARRPREDRFEEEGYIDRAGREYDDRPAPREYDEPPIYRGGYDEPRFDPRLRGPREFERPAPRLGALRGSTRGALAMDPRRMAMLFEEGSPLAKITTLRPKDYSEARTIGEKFRDGTPVIMDLVSMDNADAKRLVDFAAGLAFALRGSFDKVATKVFLLSPADVDVTADERRRIAEAGFYAYQ</sequence>
<protein>
    <recommendedName>
        <fullName evidence="1">Cell division protein SepF</fullName>
    </recommendedName>
</protein>
<feature type="chain" id="PRO_0000334045" description="Cell division protein SepF">
    <location>
        <begin position="1"/>
        <end position="220"/>
    </location>
</feature>
<feature type="region of interest" description="Disordered" evidence="2">
    <location>
        <begin position="33"/>
        <end position="82"/>
    </location>
</feature>
<feature type="compositionally biased region" description="Basic and acidic residues" evidence="2">
    <location>
        <begin position="52"/>
        <end position="70"/>
    </location>
</feature>
<proteinExistence type="inferred from homology"/>